<reference key="1">
    <citation type="journal article" date="2004" name="Nat. Biotechnol.">
        <title>Complete sequence and comparative genome analysis of the dairy bacterium Streptococcus thermophilus.</title>
        <authorList>
            <person name="Bolotin A."/>
            <person name="Quinquis B."/>
            <person name="Renault P."/>
            <person name="Sorokin A."/>
            <person name="Ehrlich S.D."/>
            <person name="Kulakauskas S."/>
            <person name="Lapidus A."/>
            <person name="Goltsman E."/>
            <person name="Mazur M."/>
            <person name="Pusch G.D."/>
            <person name="Fonstein M."/>
            <person name="Overbeek R."/>
            <person name="Kyprides N."/>
            <person name="Purnelle B."/>
            <person name="Prozzi D."/>
            <person name="Ngui K."/>
            <person name="Masuy D."/>
            <person name="Hancy F."/>
            <person name="Burteau S."/>
            <person name="Boutry M."/>
            <person name="Delcour J."/>
            <person name="Goffeau A."/>
            <person name="Hols P."/>
        </authorList>
    </citation>
    <scope>NUCLEOTIDE SEQUENCE [LARGE SCALE GENOMIC DNA]</scope>
    <source>
        <strain>ATCC BAA-250 / LMG 18311</strain>
    </source>
</reference>
<keyword id="KW-0963">Cytoplasm</keyword>
<keyword id="KW-0489">Methyltransferase</keyword>
<keyword id="KW-1185">Reference proteome</keyword>
<keyword id="KW-0949">S-adenosyl-L-methionine</keyword>
<keyword id="KW-0808">Transferase</keyword>
<name>PRMA_STRT2</name>
<gene>
    <name evidence="1" type="primary">prmA</name>
    <name type="ordered locus">stu0137</name>
</gene>
<comment type="function">
    <text evidence="1">Methylates ribosomal protein L11.</text>
</comment>
<comment type="catalytic activity">
    <reaction evidence="1">
        <text>L-lysyl-[protein] + 3 S-adenosyl-L-methionine = N(6),N(6),N(6)-trimethyl-L-lysyl-[protein] + 3 S-adenosyl-L-homocysteine + 3 H(+)</text>
        <dbReference type="Rhea" id="RHEA:54192"/>
        <dbReference type="Rhea" id="RHEA-COMP:9752"/>
        <dbReference type="Rhea" id="RHEA-COMP:13826"/>
        <dbReference type="ChEBI" id="CHEBI:15378"/>
        <dbReference type="ChEBI" id="CHEBI:29969"/>
        <dbReference type="ChEBI" id="CHEBI:57856"/>
        <dbReference type="ChEBI" id="CHEBI:59789"/>
        <dbReference type="ChEBI" id="CHEBI:61961"/>
    </reaction>
</comment>
<comment type="subcellular location">
    <subcellularLocation>
        <location evidence="1">Cytoplasm</location>
    </subcellularLocation>
</comment>
<comment type="similarity">
    <text evidence="1">Belongs to the methyltransferase superfamily. PrmA family.</text>
</comment>
<protein>
    <recommendedName>
        <fullName evidence="1">Ribosomal protein L11 methyltransferase</fullName>
        <shortName evidence="1">L11 Mtase</shortName>
        <ecNumber evidence="1">2.1.1.-</ecNumber>
    </recommendedName>
</protein>
<organism>
    <name type="scientific">Streptococcus thermophilus (strain ATCC BAA-250 / LMG 18311)</name>
    <dbReference type="NCBI Taxonomy" id="264199"/>
    <lineage>
        <taxon>Bacteria</taxon>
        <taxon>Bacillati</taxon>
        <taxon>Bacillota</taxon>
        <taxon>Bacilli</taxon>
        <taxon>Lactobacillales</taxon>
        <taxon>Streptococcaceae</taxon>
        <taxon>Streptococcus</taxon>
    </lineage>
</organism>
<evidence type="ECO:0000255" key="1">
    <source>
        <dbReference type="HAMAP-Rule" id="MF_00735"/>
    </source>
</evidence>
<accession>Q5M6B7</accession>
<sequence>MNKWQELTIEVNREVEEAASNILIESGSQGVTIDDSADYLENADRFGELYPEVEQVETVKITAYYPESADIEAITKQVNDRLDELTDFGLETGDIHLVTQELVEEDWAENWKKYYEPARITHDLTIVPSWTDYEASVGEKIIKLDPGMAFGTGTHPTTKMSLFALEQVLRGGETVIDVGTGSGVLSIASSLLGAKEIYAYDLDDVAVRVAQENIDMNPGMENIHVATGDLLKGVTQEADVIVANILADILIHLMEDAYRLVKDEGYLIMSGIISEKWDMVRELAEKAGFLLETHMVQGEWNACVFKKTDDISGVIGG</sequence>
<proteinExistence type="inferred from homology"/>
<dbReference type="EC" id="2.1.1.-" evidence="1"/>
<dbReference type="EMBL" id="CP000023">
    <property type="protein sequence ID" value="AAV59862.1"/>
    <property type="molecule type" value="Genomic_DNA"/>
</dbReference>
<dbReference type="RefSeq" id="WP_011225343.1">
    <property type="nucleotide sequence ID" value="NC_006448.1"/>
</dbReference>
<dbReference type="SMR" id="Q5M6B7"/>
<dbReference type="STRING" id="264199.stu0137"/>
<dbReference type="GeneID" id="66898083"/>
<dbReference type="KEGG" id="stl:stu0137"/>
<dbReference type="PATRIC" id="fig|264199.4.peg.143"/>
<dbReference type="eggNOG" id="COG2264">
    <property type="taxonomic scope" value="Bacteria"/>
</dbReference>
<dbReference type="HOGENOM" id="CLU_049382_0_1_9"/>
<dbReference type="Proteomes" id="UP000001170">
    <property type="component" value="Chromosome"/>
</dbReference>
<dbReference type="GO" id="GO:0005737">
    <property type="term" value="C:cytoplasm"/>
    <property type="evidence" value="ECO:0007669"/>
    <property type="project" value="UniProtKB-SubCell"/>
</dbReference>
<dbReference type="GO" id="GO:0016279">
    <property type="term" value="F:protein-lysine N-methyltransferase activity"/>
    <property type="evidence" value="ECO:0007669"/>
    <property type="project" value="RHEA"/>
</dbReference>
<dbReference type="GO" id="GO:0032259">
    <property type="term" value="P:methylation"/>
    <property type="evidence" value="ECO:0007669"/>
    <property type="project" value="UniProtKB-KW"/>
</dbReference>
<dbReference type="CDD" id="cd02440">
    <property type="entry name" value="AdoMet_MTases"/>
    <property type="match status" value="1"/>
</dbReference>
<dbReference type="Gene3D" id="3.40.50.150">
    <property type="entry name" value="Vaccinia Virus protein VP39"/>
    <property type="match status" value="1"/>
</dbReference>
<dbReference type="HAMAP" id="MF_00735">
    <property type="entry name" value="Methyltr_PrmA"/>
    <property type="match status" value="1"/>
</dbReference>
<dbReference type="InterPro" id="IPR050078">
    <property type="entry name" value="Ribosomal_L11_MeTrfase_PrmA"/>
</dbReference>
<dbReference type="InterPro" id="IPR004498">
    <property type="entry name" value="Ribosomal_PrmA_MeTrfase"/>
</dbReference>
<dbReference type="InterPro" id="IPR029063">
    <property type="entry name" value="SAM-dependent_MTases_sf"/>
</dbReference>
<dbReference type="NCBIfam" id="TIGR00406">
    <property type="entry name" value="prmA"/>
    <property type="match status" value="1"/>
</dbReference>
<dbReference type="PANTHER" id="PTHR43648">
    <property type="entry name" value="ELECTRON TRANSFER FLAVOPROTEIN BETA SUBUNIT LYSINE METHYLTRANSFERASE"/>
    <property type="match status" value="1"/>
</dbReference>
<dbReference type="PANTHER" id="PTHR43648:SF1">
    <property type="entry name" value="ELECTRON TRANSFER FLAVOPROTEIN BETA SUBUNIT LYSINE METHYLTRANSFERASE"/>
    <property type="match status" value="1"/>
</dbReference>
<dbReference type="Pfam" id="PF06325">
    <property type="entry name" value="PrmA"/>
    <property type="match status" value="1"/>
</dbReference>
<dbReference type="PIRSF" id="PIRSF000401">
    <property type="entry name" value="RPL11_MTase"/>
    <property type="match status" value="1"/>
</dbReference>
<dbReference type="SUPFAM" id="SSF53335">
    <property type="entry name" value="S-adenosyl-L-methionine-dependent methyltransferases"/>
    <property type="match status" value="1"/>
</dbReference>
<feature type="chain" id="PRO_1000046112" description="Ribosomal protein L11 methyltransferase">
    <location>
        <begin position="1"/>
        <end position="317"/>
    </location>
</feature>
<feature type="binding site" evidence="1">
    <location>
        <position position="158"/>
    </location>
    <ligand>
        <name>S-adenosyl-L-methionine</name>
        <dbReference type="ChEBI" id="CHEBI:59789"/>
    </ligand>
</feature>
<feature type="binding site" evidence="1">
    <location>
        <position position="179"/>
    </location>
    <ligand>
        <name>S-adenosyl-L-methionine</name>
        <dbReference type="ChEBI" id="CHEBI:59789"/>
    </ligand>
</feature>
<feature type="binding site" evidence="1">
    <location>
        <position position="201"/>
    </location>
    <ligand>
        <name>S-adenosyl-L-methionine</name>
        <dbReference type="ChEBI" id="CHEBI:59789"/>
    </ligand>
</feature>
<feature type="binding site" evidence="1">
    <location>
        <position position="244"/>
    </location>
    <ligand>
        <name>S-adenosyl-L-methionine</name>
        <dbReference type="ChEBI" id="CHEBI:59789"/>
    </ligand>
</feature>